<sequence>MKKATLVIGVIGADCHAVGNKVLDRVFSNHDFRVINLGVMVSQDEYIDAAIETGADAIVVSSIYGHGDIDCLGMRERCIERGLGDILLYVGGNLVVGKHDFADVETKFKEMGFDRVFAPSHDLEDVCQLMAHDINQRHDVDTRILEEAI</sequence>
<gene>
    <name evidence="1" type="primary">glmS</name>
    <name type="ordered locus">Z0895</name>
    <name type="ordered locus">ECs0764</name>
</gene>
<reference key="1">
    <citation type="journal article" date="2001" name="Nature">
        <title>Genome sequence of enterohaemorrhagic Escherichia coli O157:H7.</title>
        <authorList>
            <person name="Perna N.T."/>
            <person name="Plunkett G. III"/>
            <person name="Burland V."/>
            <person name="Mau B."/>
            <person name="Glasner J.D."/>
            <person name="Rose D.J."/>
            <person name="Mayhew G.F."/>
            <person name="Evans P.S."/>
            <person name="Gregor J."/>
            <person name="Kirkpatrick H.A."/>
            <person name="Posfai G."/>
            <person name="Hackett J."/>
            <person name="Klink S."/>
            <person name="Boutin A."/>
            <person name="Shao Y."/>
            <person name="Miller L."/>
            <person name="Grotbeck E.J."/>
            <person name="Davis N.W."/>
            <person name="Lim A."/>
            <person name="Dimalanta E.T."/>
            <person name="Potamousis K."/>
            <person name="Apodaca J."/>
            <person name="Anantharaman T.S."/>
            <person name="Lin J."/>
            <person name="Yen G."/>
            <person name="Schwartz D.C."/>
            <person name="Welch R.A."/>
            <person name="Blattner F.R."/>
        </authorList>
    </citation>
    <scope>NUCLEOTIDE SEQUENCE [LARGE SCALE GENOMIC DNA]</scope>
    <source>
        <strain>O157:H7 / EDL933 / ATCC 700927 / EHEC</strain>
    </source>
</reference>
<reference key="2">
    <citation type="journal article" date="2001" name="DNA Res.">
        <title>Complete genome sequence of enterohemorrhagic Escherichia coli O157:H7 and genomic comparison with a laboratory strain K-12.</title>
        <authorList>
            <person name="Hayashi T."/>
            <person name="Makino K."/>
            <person name="Ohnishi M."/>
            <person name="Kurokawa K."/>
            <person name="Ishii K."/>
            <person name="Yokoyama K."/>
            <person name="Han C.-G."/>
            <person name="Ohtsubo E."/>
            <person name="Nakayama K."/>
            <person name="Murata T."/>
            <person name="Tanaka M."/>
            <person name="Tobe T."/>
            <person name="Iida T."/>
            <person name="Takami H."/>
            <person name="Honda T."/>
            <person name="Sasakawa C."/>
            <person name="Ogasawara N."/>
            <person name="Yasunaga T."/>
            <person name="Kuhara S."/>
            <person name="Shiba T."/>
            <person name="Hattori M."/>
            <person name="Shinagawa H."/>
        </authorList>
    </citation>
    <scope>NUCLEOTIDE SEQUENCE [LARGE SCALE GENOMIC DNA]</scope>
    <source>
        <strain>O157:H7 / Sakai / RIMD 0509952 / EHEC</strain>
    </source>
</reference>
<organism>
    <name type="scientific">Escherichia coli O157:H7</name>
    <dbReference type="NCBI Taxonomy" id="83334"/>
    <lineage>
        <taxon>Bacteria</taxon>
        <taxon>Pseudomonadati</taxon>
        <taxon>Pseudomonadota</taxon>
        <taxon>Gammaproteobacteria</taxon>
        <taxon>Enterobacterales</taxon>
        <taxon>Enterobacteriaceae</taxon>
        <taxon>Escherichia</taxon>
    </lineage>
</organism>
<dbReference type="EC" id="5.4.99.1" evidence="1"/>
<dbReference type="EMBL" id="AE005174">
    <property type="protein sequence ID" value="AAG55064.1"/>
    <property type="status" value="ALT_INIT"/>
    <property type="molecule type" value="Genomic_DNA"/>
</dbReference>
<dbReference type="EMBL" id="BA000007">
    <property type="protein sequence ID" value="BAB34187.1"/>
    <property type="molecule type" value="Genomic_DNA"/>
</dbReference>
<dbReference type="PIR" id="D85575">
    <property type="entry name" value="D85575"/>
</dbReference>
<dbReference type="PIR" id="D90724">
    <property type="entry name" value="D90724"/>
</dbReference>
<dbReference type="RefSeq" id="NP_308791.1">
    <property type="nucleotide sequence ID" value="NC_002695.1"/>
</dbReference>
<dbReference type="RefSeq" id="WP_000710390.1">
    <property type="nucleotide sequence ID" value="NZ_VOAI01000019.1"/>
</dbReference>
<dbReference type="SMR" id="P58620"/>
<dbReference type="STRING" id="155864.Z0895"/>
<dbReference type="GeneID" id="75170728"/>
<dbReference type="KEGG" id="ece:Z0895"/>
<dbReference type="KEGG" id="ecs:ECs_0764"/>
<dbReference type="PATRIC" id="fig|386585.9.peg.883"/>
<dbReference type="eggNOG" id="COG2185">
    <property type="taxonomic scope" value="Bacteria"/>
</dbReference>
<dbReference type="HOGENOM" id="CLU_136705_0_0_6"/>
<dbReference type="OMA" id="GHGEMDC"/>
<dbReference type="UniPathway" id="UPA00561">
    <property type="reaction ID" value="UER00617"/>
</dbReference>
<dbReference type="Proteomes" id="UP000000558">
    <property type="component" value="Chromosome"/>
</dbReference>
<dbReference type="Proteomes" id="UP000002519">
    <property type="component" value="Chromosome"/>
</dbReference>
<dbReference type="GO" id="GO:0031419">
    <property type="term" value="F:cobalamin binding"/>
    <property type="evidence" value="ECO:0007669"/>
    <property type="project" value="UniProtKB-KW"/>
</dbReference>
<dbReference type="GO" id="GO:0046872">
    <property type="term" value="F:metal ion binding"/>
    <property type="evidence" value="ECO:0007669"/>
    <property type="project" value="UniProtKB-KW"/>
</dbReference>
<dbReference type="GO" id="GO:0050097">
    <property type="term" value="F:methylaspartate mutase activity"/>
    <property type="evidence" value="ECO:0007669"/>
    <property type="project" value="UniProtKB-UniRule"/>
</dbReference>
<dbReference type="GO" id="GO:0019670">
    <property type="term" value="P:anaerobic glutamate catabolic process"/>
    <property type="evidence" value="ECO:0007669"/>
    <property type="project" value="InterPro"/>
</dbReference>
<dbReference type="GO" id="GO:0019553">
    <property type="term" value="P:glutamate catabolic process via L-citramalate"/>
    <property type="evidence" value="ECO:0007669"/>
    <property type="project" value="UniProtKB-UniRule"/>
</dbReference>
<dbReference type="CDD" id="cd02072">
    <property type="entry name" value="Glm_B12_BD"/>
    <property type="match status" value="1"/>
</dbReference>
<dbReference type="Gene3D" id="3.40.50.280">
    <property type="entry name" value="Cobalamin-binding domain"/>
    <property type="match status" value="1"/>
</dbReference>
<dbReference type="HAMAP" id="MF_00526">
    <property type="entry name" value="Me_Asp_mutase_S"/>
    <property type="match status" value="1"/>
</dbReference>
<dbReference type="InterPro" id="IPR006158">
    <property type="entry name" value="Cobalamin-bd"/>
</dbReference>
<dbReference type="InterPro" id="IPR036724">
    <property type="entry name" value="Cobalamin-bd_sf"/>
</dbReference>
<dbReference type="InterPro" id="IPR006394">
    <property type="entry name" value="GlmS"/>
</dbReference>
<dbReference type="NCBIfam" id="TIGR01501">
    <property type="entry name" value="MthylAspMutase"/>
    <property type="match status" value="1"/>
</dbReference>
<dbReference type="NCBIfam" id="NF002612">
    <property type="entry name" value="PRK02261.1"/>
    <property type="match status" value="1"/>
</dbReference>
<dbReference type="Pfam" id="PF02310">
    <property type="entry name" value="B12-binding"/>
    <property type="match status" value="1"/>
</dbReference>
<dbReference type="SUPFAM" id="SSF52242">
    <property type="entry name" value="Cobalamin (vitamin B12)-binding domain"/>
    <property type="match status" value="1"/>
</dbReference>
<dbReference type="PROSITE" id="PS51332">
    <property type="entry name" value="B12_BINDING"/>
    <property type="match status" value="1"/>
</dbReference>
<evidence type="ECO:0000255" key="1">
    <source>
        <dbReference type="HAMAP-Rule" id="MF_00526"/>
    </source>
</evidence>
<evidence type="ECO:0000305" key="2"/>
<protein>
    <recommendedName>
        <fullName evidence="1">Glutamate mutase sigma subunit</fullName>
        <ecNumber evidence="1">5.4.99.1</ecNumber>
    </recommendedName>
    <alternativeName>
        <fullName evidence="1">Glutamate mutase S chain</fullName>
    </alternativeName>
    <alternativeName>
        <fullName evidence="1">Glutamate mutase small subunit</fullName>
    </alternativeName>
    <alternativeName>
        <fullName evidence="1">Methylaspartate mutase</fullName>
    </alternativeName>
</protein>
<feature type="chain" id="PRO_0000216446" description="Glutamate mutase sigma subunit">
    <location>
        <begin position="1"/>
        <end position="149"/>
    </location>
</feature>
<feature type="domain" description="B12-binding" evidence="1">
    <location>
        <begin position="3"/>
        <end position="140"/>
    </location>
</feature>
<feature type="binding site" evidence="1">
    <location>
        <begin position="13"/>
        <end position="17"/>
    </location>
    <ligand>
        <name>adenosylcob(III)alamin</name>
        <dbReference type="ChEBI" id="CHEBI:18408"/>
    </ligand>
</feature>
<feature type="binding site" description="axial binding residue" evidence="1">
    <location>
        <position position="16"/>
    </location>
    <ligand>
        <name>adenosylcob(III)alamin</name>
        <dbReference type="ChEBI" id="CHEBI:18408"/>
    </ligand>
    <ligandPart>
        <name>Co</name>
        <dbReference type="ChEBI" id="CHEBI:27638"/>
    </ligandPart>
</feature>
<feature type="binding site" evidence="1">
    <location>
        <begin position="61"/>
        <end position="63"/>
    </location>
    <ligand>
        <name>adenosylcob(III)alamin</name>
        <dbReference type="ChEBI" id="CHEBI:18408"/>
    </ligand>
</feature>
<feature type="binding site" evidence="1">
    <location>
        <begin position="93"/>
        <end position="97"/>
    </location>
    <ligand>
        <name>adenosylcob(III)alamin</name>
        <dbReference type="ChEBI" id="CHEBI:18408"/>
    </ligand>
</feature>
<accession>P58620</accession>
<comment type="function">
    <text evidence="1">Catalyzes the carbon skeleton rearrangement of L-glutamate to L-threo-3-methylaspartate ((2S,3S)-3-methylaspartate).</text>
</comment>
<comment type="catalytic activity">
    <reaction evidence="1">
        <text>(2S,3S)-3-methyl-L-aspartate = L-glutamate</text>
        <dbReference type="Rhea" id="RHEA:12857"/>
        <dbReference type="ChEBI" id="CHEBI:29985"/>
        <dbReference type="ChEBI" id="CHEBI:58724"/>
        <dbReference type="EC" id="5.4.99.1"/>
    </reaction>
</comment>
<comment type="cofactor">
    <cofactor evidence="1">
        <name>adenosylcob(III)alamin</name>
        <dbReference type="ChEBI" id="CHEBI:18408"/>
    </cofactor>
</comment>
<comment type="pathway">
    <text evidence="1">Amino-acid degradation; L-glutamate degradation via mesaconate pathway; acetate and pyruvate from L-glutamate: step 1/4.</text>
</comment>
<comment type="subunit">
    <text evidence="1">Heterotetramer composed of 2 epsilon subunits (GlmE) and 2 sigma subunits (GlmS). GlmE exists as a homodimer and GlmS as a monomer.</text>
</comment>
<comment type="similarity">
    <text evidence="1">Belongs to the methylaspartate mutase GlmS subunit family.</text>
</comment>
<comment type="sequence caution" evidence="2">
    <conflict type="erroneous initiation">
        <sequence resource="EMBL-CDS" id="AAG55064"/>
    </conflict>
    <text>Extended N-terminus.</text>
</comment>
<keyword id="KW-0846">Cobalamin</keyword>
<keyword id="KW-0170">Cobalt</keyword>
<keyword id="KW-0413">Isomerase</keyword>
<keyword id="KW-0479">Metal-binding</keyword>
<keyword id="KW-1185">Reference proteome</keyword>
<proteinExistence type="inferred from homology"/>
<name>GMSS_ECO57</name>